<name>MPTA_METM6</name>
<evidence type="ECO:0000255" key="1">
    <source>
        <dbReference type="HAMAP-Rule" id="MF_01527"/>
    </source>
</evidence>
<protein>
    <recommendedName>
        <fullName evidence="1">GTP cyclohydrolase MptA</fullName>
        <ecNumber evidence="1">3.5.4.39</ecNumber>
    </recommendedName>
    <alternativeName>
        <fullName evidence="1">GTP cyclohydrolase IV</fullName>
    </alternativeName>
</protein>
<reference key="1">
    <citation type="submission" date="2007-10" db="EMBL/GenBank/DDBJ databases">
        <title>Complete sequence of Methanococcus maripaludis C6.</title>
        <authorList>
            <consortium name="US DOE Joint Genome Institute"/>
            <person name="Copeland A."/>
            <person name="Lucas S."/>
            <person name="Lapidus A."/>
            <person name="Barry K."/>
            <person name="Glavina del Rio T."/>
            <person name="Dalin E."/>
            <person name="Tice H."/>
            <person name="Pitluck S."/>
            <person name="Clum A."/>
            <person name="Schmutz J."/>
            <person name="Larimer F."/>
            <person name="Land M."/>
            <person name="Hauser L."/>
            <person name="Kyrpides N."/>
            <person name="Mikhailova N."/>
            <person name="Sieprawska-Lupa M."/>
            <person name="Whitman W.B."/>
            <person name="Richardson P."/>
        </authorList>
    </citation>
    <scope>NUCLEOTIDE SEQUENCE [LARGE SCALE GENOMIC DNA]</scope>
    <source>
        <strain>C6 / ATCC BAA-1332</strain>
    </source>
</reference>
<organism>
    <name type="scientific">Methanococcus maripaludis (strain C6 / ATCC BAA-1332)</name>
    <dbReference type="NCBI Taxonomy" id="444158"/>
    <lineage>
        <taxon>Archaea</taxon>
        <taxon>Methanobacteriati</taxon>
        <taxon>Methanobacteriota</taxon>
        <taxon>Methanomada group</taxon>
        <taxon>Methanococci</taxon>
        <taxon>Methanococcales</taxon>
        <taxon>Methanococcaceae</taxon>
        <taxon>Methanococcus</taxon>
    </lineage>
</organism>
<accession>A9A8Q7</accession>
<feature type="chain" id="PRO_0000372042" description="GTP cyclohydrolase MptA">
    <location>
        <begin position="1"/>
        <end position="315"/>
    </location>
</feature>
<feature type="site" description="May be catalytically important" evidence="1">
    <location>
        <position position="161"/>
    </location>
</feature>
<keyword id="KW-0378">Hydrolase</keyword>
<keyword id="KW-0408">Iron</keyword>
<keyword id="KW-0479">Metal-binding</keyword>
<comment type="function">
    <text evidence="1">Converts GTP to 7,8-dihydro-D-neopterin 2',3'-cyclic phosphate, the first intermediate in the biosynthesis of coenzyme methanopterin.</text>
</comment>
<comment type="catalytic activity">
    <reaction evidence="1">
        <text>GTP + H2O = 7,8-dihydroneopterin 2',3'-cyclic phosphate + formate + diphosphate + H(+)</text>
        <dbReference type="Rhea" id="RHEA:25860"/>
        <dbReference type="ChEBI" id="CHEBI:15377"/>
        <dbReference type="ChEBI" id="CHEBI:15378"/>
        <dbReference type="ChEBI" id="CHEBI:15740"/>
        <dbReference type="ChEBI" id="CHEBI:33019"/>
        <dbReference type="ChEBI" id="CHEBI:37565"/>
        <dbReference type="ChEBI" id="CHEBI:58854"/>
        <dbReference type="EC" id="3.5.4.39"/>
    </reaction>
</comment>
<comment type="cofactor">
    <cofactor evidence="1">
        <name>Fe(2+)</name>
        <dbReference type="ChEBI" id="CHEBI:29033"/>
    </cofactor>
    <text evidence="1">Binds 1 Fe(2+) ion per subunit.</text>
</comment>
<comment type="pathway">
    <text evidence="1">Cofactor biosynthesis; 5,6,7,8-tetrahydromethanopterin biosynthesis.</text>
</comment>
<comment type="subunit">
    <text evidence="1">Homodimer.</text>
</comment>
<comment type="similarity">
    <text evidence="1">Belongs to the GTP cyclohydrolase IV family.</text>
</comment>
<proteinExistence type="inferred from homology"/>
<sequence length="315" mass="35758">MQCNDVQATEPDIKVSLTRVGVTNLKKLVKLKRTNKRDIVLLPTFEVFVDLPSSQKGIHMSRSPEVIEEVVENILLEKEIYGVEDLSVEIVMKLFEKHEYATRAEIMLYSDYMMEEKSPVTQKDSQEIGKIIARAYGVKDENGKIHVKKMVGAEVVGITACPCAQNMLKENAVTSLKEKGFSNEEIEKILDSVTIATHNQRGIGTVMIEVPNGYTVGISKIIKIIKDSMSGEVYELLKRSDEAFVVETAHKNPKFVEDCAREMIKRVVDVFDYLPEDTQVLVRQVNKESIHRHDAFAERNSTLRELRDELKTLTN</sequence>
<dbReference type="EC" id="3.5.4.39" evidence="1"/>
<dbReference type="EMBL" id="CP000867">
    <property type="protein sequence ID" value="ABX01730.1"/>
    <property type="molecule type" value="Genomic_DNA"/>
</dbReference>
<dbReference type="SMR" id="A9A8Q7"/>
<dbReference type="STRING" id="444158.MmarC6_0915"/>
<dbReference type="KEGG" id="mmx:MmarC6_0915"/>
<dbReference type="eggNOG" id="arCOG04301">
    <property type="taxonomic scope" value="Archaea"/>
</dbReference>
<dbReference type="HOGENOM" id="CLU_062816_1_0_2"/>
<dbReference type="OrthoDB" id="53087at2157"/>
<dbReference type="PhylomeDB" id="A9A8Q7"/>
<dbReference type="UniPathway" id="UPA00065"/>
<dbReference type="GO" id="GO:0003934">
    <property type="term" value="F:GTP cyclohydrolase I activity"/>
    <property type="evidence" value="ECO:0007669"/>
    <property type="project" value="InterPro"/>
</dbReference>
<dbReference type="GO" id="GO:0044682">
    <property type="term" value="F:GTP cyclohydrolase IV activity"/>
    <property type="evidence" value="ECO:0007669"/>
    <property type="project" value="UniProtKB-UniRule"/>
</dbReference>
<dbReference type="GO" id="GO:0005506">
    <property type="term" value="F:iron ion binding"/>
    <property type="evidence" value="ECO:0007669"/>
    <property type="project" value="UniProtKB-UniRule"/>
</dbReference>
<dbReference type="GO" id="GO:2001118">
    <property type="term" value="P:tetrahydromethanopterin biosynthetic process"/>
    <property type="evidence" value="ECO:0007669"/>
    <property type="project" value="UniProtKB-UniRule"/>
</dbReference>
<dbReference type="Gene3D" id="3.10.270.10">
    <property type="entry name" value="Urate Oxidase"/>
    <property type="match status" value="1"/>
</dbReference>
<dbReference type="HAMAP" id="MF_01527_A">
    <property type="entry name" value="GTP_cyclohydrol_A"/>
    <property type="match status" value="1"/>
</dbReference>
<dbReference type="InterPro" id="IPR003801">
    <property type="entry name" value="GTP_cyclohydrolase_FolE2/MptA"/>
</dbReference>
<dbReference type="InterPro" id="IPR022840">
    <property type="entry name" value="GTP_cyclohydrolase_MptA"/>
</dbReference>
<dbReference type="NCBIfam" id="TIGR00294">
    <property type="entry name" value="GTP cyclohydrolase MptA"/>
    <property type="match status" value="1"/>
</dbReference>
<dbReference type="PANTHER" id="PTHR36445">
    <property type="entry name" value="GTP CYCLOHYDROLASE MPTA"/>
    <property type="match status" value="1"/>
</dbReference>
<dbReference type="PANTHER" id="PTHR36445:SF1">
    <property type="entry name" value="GTP CYCLOHYDROLASE MPTA"/>
    <property type="match status" value="1"/>
</dbReference>
<dbReference type="Pfam" id="PF02649">
    <property type="entry name" value="GCHY-1"/>
    <property type="match status" value="1"/>
</dbReference>
<gene>
    <name evidence="1" type="primary">mptA</name>
    <name type="ordered locus">MmarC6_0915</name>
</gene>